<comment type="function">
    <text evidence="1">Catalyzes the formation of phosphodiester linkages between 5'-phosphoryl and 3'-hydroxyl groups in double-stranded DNA using NAD as a coenzyme and as the energy source for the reaction.</text>
</comment>
<comment type="catalytic activity">
    <reaction evidence="1">
        <text>NAD(+) + (deoxyribonucleotide)n-3'-hydroxyl + 5'-phospho-(deoxyribonucleotide)m = (deoxyribonucleotide)n+m + AMP + beta-nicotinamide D-nucleotide.</text>
        <dbReference type="EC" id="6.5.1.2"/>
    </reaction>
</comment>
<comment type="similarity">
    <text evidence="1">Belongs to the NAD-dependent DNA ligase family. LigB subfamily.</text>
</comment>
<evidence type="ECO:0000255" key="1">
    <source>
        <dbReference type="HAMAP-Rule" id="MF_01587"/>
    </source>
</evidence>
<accession>Q5PC41</accession>
<reference key="1">
    <citation type="journal article" date="2004" name="Nat. Genet.">
        <title>Comparison of genome degradation in Paratyphi A and Typhi, human-restricted serovars of Salmonella enterica that cause typhoid.</title>
        <authorList>
            <person name="McClelland M."/>
            <person name="Sanderson K.E."/>
            <person name="Clifton S.W."/>
            <person name="Latreille P."/>
            <person name="Porwollik S."/>
            <person name="Sabo A."/>
            <person name="Meyer R."/>
            <person name="Bieri T."/>
            <person name="Ozersky P."/>
            <person name="McLellan M."/>
            <person name="Harkins C.R."/>
            <person name="Wang C."/>
            <person name="Nguyen C."/>
            <person name="Berghoff A."/>
            <person name="Elliott G."/>
            <person name="Kohlberg S."/>
            <person name="Strong C."/>
            <person name="Du F."/>
            <person name="Carter J."/>
            <person name="Kremizki C."/>
            <person name="Layman D."/>
            <person name="Leonard S."/>
            <person name="Sun H."/>
            <person name="Fulton L."/>
            <person name="Nash W."/>
            <person name="Miner T."/>
            <person name="Minx P."/>
            <person name="Delehaunty K."/>
            <person name="Fronick C."/>
            <person name="Magrini V."/>
            <person name="Nhan M."/>
            <person name="Warren W."/>
            <person name="Florea L."/>
            <person name="Spieth J."/>
            <person name="Wilson R.K."/>
        </authorList>
    </citation>
    <scope>NUCLEOTIDE SEQUENCE [LARGE SCALE GENOMIC DNA]</scope>
    <source>
        <strain>ATCC 9150 / SARB42</strain>
    </source>
</reference>
<feature type="chain" id="PRO_0000313552" description="DNA ligase B">
    <location>
        <begin position="1"/>
        <end position="561"/>
    </location>
</feature>
<feature type="active site" description="N6-AMP-lysine intermediate" evidence="1">
    <location>
        <position position="125"/>
    </location>
</feature>
<protein>
    <recommendedName>
        <fullName evidence="1">DNA ligase B</fullName>
        <ecNumber evidence="1">6.5.1.2</ecNumber>
    </recommendedName>
    <alternativeName>
        <fullName evidence="1">Polydeoxyribonucleotide synthase [NAD(+)] B</fullName>
    </alternativeName>
</protein>
<gene>
    <name evidence="1" type="primary">ligB</name>
    <name type="ordered locus">SPA3591</name>
</gene>
<name>LIGB_SALPA</name>
<dbReference type="EC" id="6.5.1.2" evidence="1"/>
<dbReference type="EMBL" id="CP000026">
    <property type="protein sequence ID" value="AAV79392.1"/>
    <property type="molecule type" value="Genomic_DNA"/>
</dbReference>
<dbReference type="RefSeq" id="WP_001241850.1">
    <property type="nucleotide sequence ID" value="NC_006511.1"/>
</dbReference>
<dbReference type="SMR" id="Q5PC41"/>
<dbReference type="KEGG" id="spt:SPA3591"/>
<dbReference type="HOGENOM" id="CLU_489786_0_0_6"/>
<dbReference type="Proteomes" id="UP000008185">
    <property type="component" value="Chromosome"/>
</dbReference>
<dbReference type="GO" id="GO:0003911">
    <property type="term" value="F:DNA ligase (NAD+) activity"/>
    <property type="evidence" value="ECO:0007669"/>
    <property type="project" value="UniProtKB-UniRule"/>
</dbReference>
<dbReference type="GO" id="GO:0006281">
    <property type="term" value="P:DNA repair"/>
    <property type="evidence" value="ECO:0007669"/>
    <property type="project" value="UniProtKB-KW"/>
</dbReference>
<dbReference type="GO" id="GO:0006260">
    <property type="term" value="P:DNA replication"/>
    <property type="evidence" value="ECO:0007669"/>
    <property type="project" value="UniProtKB-KW"/>
</dbReference>
<dbReference type="FunFam" id="1.10.287.610:FF:000003">
    <property type="entry name" value="DNA ligase B"/>
    <property type="match status" value="1"/>
</dbReference>
<dbReference type="FunFam" id="2.40.50.140:FF:000139">
    <property type="entry name" value="DNA ligase B"/>
    <property type="match status" value="1"/>
</dbReference>
<dbReference type="FunFam" id="3.30.470.30:FF:000007">
    <property type="entry name" value="DNA ligase B"/>
    <property type="match status" value="1"/>
</dbReference>
<dbReference type="Gene3D" id="3.30.470.30">
    <property type="entry name" value="DNA ligase/mRNA capping enzyme"/>
    <property type="match status" value="1"/>
</dbReference>
<dbReference type="Gene3D" id="1.10.287.610">
    <property type="entry name" value="Helix hairpin bin"/>
    <property type="match status" value="1"/>
</dbReference>
<dbReference type="Gene3D" id="2.40.50.140">
    <property type="entry name" value="Nucleic acid-binding proteins"/>
    <property type="match status" value="1"/>
</dbReference>
<dbReference type="HAMAP" id="MF_01587">
    <property type="entry name" value="DNA_ligase_B"/>
    <property type="match status" value="1"/>
</dbReference>
<dbReference type="InterPro" id="IPR018239">
    <property type="entry name" value="DNA_ligase_AS"/>
</dbReference>
<dbReference type="InterPro" id="IPR020923">
    <property type="entry name" value="DNA_ligase_B"/>
</dbReference>
<dbReference type="InterPro" id="IPR033136">
    <property type="entry name" value="DNA_ligase_CS"/>
</dbReference>
<dbReference type="InterPro" id="IPR013839">
    <property type="entry name" value="DNAligase_adenylation"/>
</dbReference>
<dbReference type="InterPro" id="IPR013840">
    <property type="entry name" value="DNAligase_N"/>
</dbReference>
<dbReference type="InterPro" id="IPR012340">
    <property type="entry name" value="NA-bd_OB-fold"/>
</dbReference>
<dbReference type="InterPro" id="IPR050326">
    <property type="entry name" value="NAD_dep_DNA_ligaseB"/>
</dbReference>
<dbReference type="InterPro" id="IPR004150">
    <property type="entry name" value="NAD_DNA_ligase_OB"/>
</dbReference>
<dbReference type="InterPro" id="IPR010994">
    <property type="entry name" value="RuvA_2-like"/>
</dbReference>
<dbReference type="NCBIfam" id="NF005987">
    <property type="entry name" value="PRK08097.1"/>
    <property type="match status" value="1"/>
</dbReference>
<dbReference type="PANTHER" id="PTHR47810">
    <property type="entry name" value="DNA LIGASE"/>
    <property type="match status" value="1"/>
</dbReference>
<dbReference type="PANTHER" id="PTHR47810:SF1">
    <property type="entry name" value="DNA LIGASE B"/>
    <property type="match status" value="1"/>
</dbReference>
<dbReference type="Pfam" id="PF01653">
    <property type="entry name" value="DNA_ligase_aden"/>
    <property type="match status" value="1"/>
</dbReference>
<dbReference type="Pfam" id="PF03120">
    <property type="entry name" value="DNA_ligase_OB"/>
    <property type="match status" value="1"/>
</dbReference>
<dbReference type="SMART" id="SM00532">
    <property type="entry name" value="LIGANc"/>
    <property type="match status" value="1"/>
</dbReference>
<dbReference type="SUPFAM" id="SSF56091">
    <property type="entry name" value="DNA ligase/mRNA capping enzyme, catalytic domain"/>
    <property type="match status" value="1"/>
</dbReference>
<dbReference type="SUPFAM" id="SSF50249">
    <property type="entry name" value="Nucleic acid-binding proteins"/>
    <property type="match status" value="1"/>
</dbReference>
<dbReference type="SUPFAM" id="SSF47781">
    <property type="entry name" value="RuvA domain 2-like"/>
    <property type="match status" value="1"/>
</dbReference>
<dbReference type="PROSITE" id="PS01055">
    <property type="entry name" value="DNA_LIGASE_N1"/>
    <property type="match status" value="1"/>
</dbReference>
<dbReference type="PROSITE" id="PS01056">
    <property type="entry name" value="DNA_LIGASE_N2"/>
    <property type="match status" value="1"/>
</dbReference>
<keyword id="KW-0227">DNA damage</keyword>
<keyword id="KW-0234">DNA repair</keyword>
<keyword id="KW-0235">DNA replication</keyword>
<keyword id="KW-0436">Ligase</keyword>
<keyword id="KW-0520">NAD</keyword>
<organism>
    <name type="scientific">Salmonella paratyphi A (strain ATCC 9150 / SARB42)</name>
    <dbReference type="NCBI Taxonomy" id="295319"/>
    <lineage>
        <taxon>Bacteria</taxon>
        <taxon>Pseudomonadati</taxon>
        <taxon>Pseudomonadota</taxon>
        <taxon>Gammaproteobacteria</taxon>
        <taxon>Enterobacterales</taxon>
        <taxon>Enterobacteriaceae</taxon>
        <taxon>Salmonella</taxon>
    </lineage>
</organism>
<proteinExistence type="inferred from homology"/>
<sequence length="561" mass="62709">MRLWKSMAWGILLWHSQSGALCPAWPPARAAEEITRLQQQLADWNDIYWKQGVSAVDDSVYDQLSARLVQWQRCVGQDVSSTPVSPPLNGTTMHPVAHTGVRKLADRQAVEQWVRGRSELWVQPKVDGVAVTLVYQNGKLTRAISRGNGLQGEDWTPKIRLIPSIPQTTQGALANAVLQGEIFLQREGHIQQRMGGMNARSKAAGMLMRQDNASALNSLGIFIWAWPDGPANMPERLSQLAKAGFSLTKKYSLAVKDASEVERARQSWLTSALPFVTDGVVIRMAKEPASQYWRPGQGDWLAAWKYPPVAQVAQVSAIQFSVGKSGKITVVASLVPVILDDKRVQRVNIGSVKRWEAWDIAPGDQILVSLAGQGIPRLDEVVWRSRERSKPVPPGSHFNSLTCFYASATCQEQFISRLVWLGSRSALGLDGMGEASWRALHQTHRFEHIFSWLALTSAQIANTPGVAKGKSEQIWRQFYLARRQSFTRWIMAMDIPLTQAALQASGDRSWEQLLMRTEQHWRQLPATGERRAGRVIDWRNNPQINALSRWLAAQHIPGFGS</sequence>